<geneLocation type="plasmid">
    <name>pSymA</name>
    <name>megaplasmid 1</name>
</geneLocation>
<proteinExistence type="predicted"/>
<evidence type="ECO:0000256" key="1">
    <source>
        <dbReference type="SAM" id="MobiDB-lite"/>
    </source>
</evidence>
<evidence type="ECO:0000305" key="2"/>
<feature type="chain" id="PRO_0000160646" description="Uncharacterized protein RA0936">
    <location>
        <begin position="1"/>
        <end position="197"/>
    </location>
</feature>
<feature type="region of interest" description="Disordered" evidence="1">
    <location>
        <begin position="1"/>
        <end position="135"/>
    </location>
</feature>
<feature type="compositionally biased region" description="Polar residues" evidence="1">
    <location>
        <begin position="14"/>
        <end position="32"/>
    </location>
</feature>
<feature type="compositionally biased region" description="Basic and acidic residues" evidence="1">
    <location>
        <begin position="83"/>
        <end position="96"/>
    </location>
</feature>
<feature type="compositionally biased region" description="Basic residues" evidence="1">
    <location>
        <begin position="116"/>
        <end position="132"/>
    </location>
</feature>
<feature type="sequence conflict" description="In Ref. 1; AAB63673." evidence="2" ref="1">
    <original>AGN</original>
    <variation>VPGD</variation>
    <location>
        <begin position="25"/>
        <end position="27"/>
    </location>
</feature>
<gene>
    <name type="ordered locus">RA0936</name>
    <name type="ORF">SMa1702</name>
</gene>
<name>Y4336_RHIME</name>
<organism>
    <name type="scientific">Rhizobium meliloti (strain 1021)</name>
    <name type="common">Ensifer meliloti</name>
    <name type="synonym">Sinorhizobium meliloti</name>
    <dbReference type="NCBI Taxonomy" id="266834"/>
    <lineage>
        <taxon>Bacteria</taxon>
        <taxon>Pseudomonadati</taxon>
        <taxon>Pseudomonadota</taxon>
        <taxon>Alphaproteobacteria</taxon>
        <taxon>Hyphomicrobiales</taxon>
        <taxon>Rhizobiaceae</taxon>
        <taxon>Sinorhizobium/Ensifer group</taxon>
        <taxon>Sinorhizobium</taxon>
    </lineage>
</organism>
<dbReference type="EMBL" id="U90220">
    <property type="protein sequence ID" value="AAB63673.1"/>
    <property type="molecule type" value="Genomic_DNA"/>
</dbReference>
<dbReference type="EMBL" id="AE006469">
    <property type="protein sequence ID" value="AAK65594.1"/>
    <property type="molecule type" value="Genomic_DNA"/>
</dbReference>
<dbReference type="PIR" id="H95378">
    <property type="entry name" value="H95378"/>
</dbReference>
<dbReference type="RefSeq" id="NP_436182.1">
    <property type="nucleotide sequence ID" value="NC_003037.1"/>
</dbReference>
<dbReference type="RefSeq" id="WP_010967900.1">
    <property type="nucleotide sequence ID" value="NC_003037.1"/>
</dbReference>
<dbReference type="SMR" id="O33684"/>
<dbReference type="EnsemblBacteria" id="AAK65594">
    <property type="protein sequence ID" value="AAK65594"/>
    <property type="gene ID" value="SMa1702"/>
</dbReference>
<dbReference type="KEGG" id="sme:SMa1702"/>
<dbReference type="PATRIC" id="fig|266834.11.peg.966"/>
<dbReference type="HOGENOM" id="CLU_095693_0_0_5"/>
<dbReference type="OrthoDB" id="8277693at2"/>
<dbReference type="Proteomes" id="UP000001976">
    <property type="component" value="Plasmid pSymA"/>
</dbReference>
<accession>O33684</accession>
<sequence length="197" mass="21596">MKTPWKFLARLASRQPSGKTQESSAGNDTGSKTLEHTSALPPSPTVAASPLARNEDVSVDQGPIASDKPAGHNGVAQALEPPIHADEAQTTARDEADQSGAEANSLAPKSTASTKSQRKPRIKRRERGKRANARVDAQSAVVQKHYQNLQQSSSRDLFFHELATLDEEIKMLRTQLAQKLHLQNVQLKKMLERFELS</sequence>
<comment type="similarity">
    <text evidence="2">To Rhizobium NGR234A y4nF and y4aO.</text>
</comment>
<protein>
    <recommendedName>
        <fullName>Uncharacterized protein RA0936</fullName>
    </recommendedName>
</protein>
<reference key="1">
    <citation type="journal article" date="1997" name="Mol. Plant Microbe Interact.">
        <title>Identification and characterization of a gene on Rhizobium meliloti pSyma, syrB, that negatively affects syrM expression.</title>
        <authorList>
            <person name="Barnett M.J."/>
            <person name="Long S.R."/>
        </authorList>
    </citation>
    <scope>NUCLEOTIDE SEQUENCE [GENOMIC DNA]</scope>
    <source>
        <strain>1021</strain>
    </source>
</reference>
<reference key="2">
    <citation type="journal article" date="2001" name="Proc. Natl. Acad. Sci. U.S.A.">
        <title>Nucleotide sequence and predicted functions of the entire Sinorhizobium meliloti pSymA megaplasmid.</title>
        <authorList>
            <person name="Barnett M.J."/>
            <person name="Fisher R.F."/>
            <person name="Jones T."/>
            <person name="Komp C."/>
            <person name="Abola A.P."/>
            <person name="Barloy-Hubler F."/>
            <person name="Bowser L."/>
            <person name="Capela D."/>
            <person name="Galibert F."/>
            <person name="Gouzy J."/>
            <person name="Gurjal M."/>
            <person name="Hong A."/>
            <person name="Huizar L."/>
            <person name="Hyman R.W."/>
            <person name="Kahn D."/>
            <person name="Kahn M.L."/>
            <person name="Kalman S."/>
            <person name="Keating D.H."/>
            <person name="Palm C."/>
            <person name="Peck M.C."/>
            <person name="Surzycki R."/>
            <person name="Wells D.H."/>
            <person name="Yeh K.-C."/>
            <person name="Davis R.W."/>
            <person name="Federspiel N.A."/>
            <person name="Long S.R."/>
        </authorList>
    </citation>
    <scope>NUCLEOTIDE SEQUENCE [LARGE SCALE GENOMIC DNA]</scope>
    <source>
        <strain>1021</strain>
    </source>
</reference>
<reference key="3">
    <citation type="journal article" date="2001" name="Science">
        <title>The composite genome of the legume symbiont Sinorhizobium meliloti.</title>
        <authorList>
            <person name="Galibert F."/>
            <person name="Finan T.M."/>
            <person name="Long S.R."/>
            <person name="Puehler A."/>
            <person name="Abola P."/>
            <person name="Ampe F."/>
            <person name="Barloy-Hubler F."/>
            <person name="Barnett M.J."/>
            <person name="Becker A."/>
            <person name="Boistard P."/>
            <person name="Bothe G."/>
            <person name="Boutry M."/>
            <person name="Bowser L."/>
            <person name="Buhrmester J."/>
            <person name="Cadieu E."/>
            <person name="Capela D."/>
            <person name="Chain P."/>
            <person name="Cowie A."/>
            <person name="Davis R.W."/>
            <person name="Dreano S."/>
            <person name="Federspiel N.A."/>
            <person name="Fisher R.F."/>
            <person name="Gloux S."/>
            <person name="Godrie T."/>
            <person name="Goffeau A."/>
            <person name="Golding B."/>
            <person name="Gouzy J."/>
            <person name="Gurjal M."/>
            <person name="Hernandez-Lucas I."/>
            <person name="Hong A."/>
            <person name="Huizar L."/>
            <person name="Hyman R.W."/>
            <person name="Jones T."/>
            <person name="Kahn D."/>
            <person name="Kahn M.L."/>
            <person name="Kalman S."/>
            <person name="Keating D.H."/>
            <person name="Kiss E."/>
            <person name="Komp C."/>
            <person name="Lelaure V."/>
            <person name="Masuy D."/>
            <person name="Palm C."/>
            <person name="Peck M.C."/>
            <person name="Pohl T.M."/>
            <person name="Portetelle D."/>
            <person name="Purnelle B."/>
            <person name="Ramsperger U."/>
            <person name="Surzycki R."/>
            <person name="Thebault P."/>
            <person name="Vandenbol M."/>
            <person name="Vorhoelter F.J."/>
            <person name="Weidner S."/>
            <person name="Wells D.H."/>
            <person name="Wong K."/>
            <person name="Yeh K.-C."/>
            <person name="Batut J."/>
        </authorList>
    </citation>
    <scope>NUCLEOTIDE SEQUENCE [LARGE SCALE GENOMIC DNA]</scope>
    <source>
        <strain>1021</strain>
    </source>
</reference>
<keyword id="KW-0614">Plasmid</keyword>
<keyword id="KW-1185">Reference proteome</keyword>